<reference key="1">
    <citation type="journal article" date="2008" name="Genome Res.">
        <title>Comparative genome analysis of Salmonella enteritidis PT4 and Salmonella gallinarum 287/91 provides insights into evolutionary and host adaptation pathways.</title>
        <authorList>
            <person name="Thomson N.R."/>
            <person name="Clayton D.J."/>
            <person name="Windhorst D."/>
            <person name="Vernikos G."/>
            <person name="Davidson S."/>
            <person name="Churcher C."/>
            <person name="Quail M.A."/>
            <person name="Stevens M."/>
            <person name="Jones M.A."/>
            <person name="Watson M."/>
            <person name="Barron A."/>
            <person name="Layton A."/>
            <person name="Pickard D."/>
            <person name="Kingsley R.A."/>
            <person name="Bignell A."/>
            <person name="Clark L."/>
            <person name="Harris B."/>
            <person name="Ormond D."/>
            <person name="Abdellah Z."/>
            <person name="Brooks K."/>
            <person name="Cherevach I."/>
            <person name="Chillingworth T."/>
            <person name="Woodward J."/>
            <person name="Norberczak H."/>
            <person name="Lord A."/>
            <person name="Arrowsmith C."/>
            <person name="Jagels K."/>
            <person name="Moule S."/>
            <person name="Mungall K."/>
            <person name="Saunders M."/>
            <person name="Whitehead S."/>
            <person name="Chabalgoity J.A."/>
            <person name="Maskell D."/>
            <person name="Humphreys T."/>
            <person name="Roberts M."/>
            <person name="Barrow P.A."/>
            <person name="Dougan G."/>
            <person name="Parkhill J."/>
        </authorList>
    </citation>
    <scope>NUCLEOTIDE SEQUENCE [LARGE SCALE GENOMIC DNA]</scope>
    <source>
        <strain>P125109</strain>
    </source>
</reference>
<keyword id="KW-0963">Cytoplasm</keyword>
<keyword id="KW-0489">Methyltransferase</keyword>
<keyword id="KW-0698">rRNA processing</keyword>
<keyword id="KW-0949">S-adenosyl-L-methionine</keyword>
<keyword id="KW-0808">Transferase</keyword>
<accession>B5R0H0</accession>
<gene>
    <name evidence="1" type="primary">rlmE</name>
    <name evidence="1" type="synonym">ftsJ</name>
    <name evidence="1" type="synonym">rrmJ</name>
    <name type="ordered locus">SEN3130</name>
</gene>
<protein>
    <recommendedName>
        <fullName evidence="1">Ribosomal RNA large subunit methyltransferase E</fullName>
        <ecNumber evidence="1">2.1.1.166</ecNumber>
    </recommendedName>
    <alternativeName>
        <fullName evidence="1">23S rRNA Um2552 methyltransferase</fullName>
    </alternativeName>
    <alternativeName>
        <fullName evidence="1">rRNA (uridine-2'-O-)-methyltransferase</fullName>
    </alternativeName>
</protein>
<dbReference type="EC" id="2.1.1.166" evidence="1"/>
<dbReference type="EMBL" id="AM933172">
    <property type="protein sequence ID" value="CAR34706.1"/>
    <property type="molecule type" value="Genomic_DNA"/>
</dbReference>
<dbReference type="RefSeq" id="WP_000145974.1">
    <property type="nucleotide sequence ID" value="NC_011294.1"/>
</dbReference>
<dbReference type="SMR" id="B5R0H0"/>
<dbReference type="KEGG" id="set:SEN3130"/>
<dbReference type="HOGENOM" id="CLU_009422_4_0_6"/>
<dbReference type="Proteomes" id="UP000000613">
    <property type="component" value="Chromosome"/>
</dbReference>
<dbReference type="GO" id="GO:0005737">
    <property type="term" value="C:cytoplasm"/>
    <property type="evidence" value="ECO:0007669"/>
    <property type="project" value="UniProtKB-SubCell"/>
</dbReference>
<dbReference type="GO" id="GO:0008650">
    <property type="term" value="F:rRNA (uridine-2'-O-)-methyltransferase activity"/>
    <property type="evidence" value="ECO:0007669"/>
    <property type="project" value="UniProtKB-UniRule"/>
</dbReference>
<dbReference type="CDD" id="cd02440">
    <property type="entry name" value="AdoMet_MTases"/>
    <property type="match status" value="1"/>
</dbReference>
<dbReference type="FunFam" id="3.40.50.150:FF:000005">
    <property type="entry name" value="Ribosomal RNA large subunit methyltransferase E"/>
    <property type="match status" value="1"/>
</dbReference>
<dbReference type="Gene3D" id="3.40.50.150">
    <property type="entry name" value="Vaccinia Virus protein VP39"/>
    <property type="match status" value="1"/>
</dbReference>
<dbReference type="HAMAP" id="MF_01547">
    <property type="entry name" value="RNA_methyltr_E"/>
    <property type="match status" value="1"/>
</dbReference>
<dbReference type="InterPro" id="IPR050082">
    <property type="entry name" value="RNA_methyltr_RlmE"/>
</dbReference>
<dbReference type="InterPro" id="IPR002877">
    <property type="entry name" value="RNA_MeTrfase_FtsJ_dom"/>
</dbReference>
<dbReference type="InterPro" id="IPR015507">
    <property type="entry name" value="rRNA-MeTfrase_E"/>
</dbReference>
<dbReference type="InterPro" id="IPR004512">
    <property type="entry name" value="rRNA_MeTrfase_gammaproteobac"/>
</dbReference>
<dbReference type="InterPro" id="IPR029063">
    <property type="entry name" value="SAM-dependent_MTases_sf"/>
</dbReference>
<dbReference type="NCBIfam" id="NF008390">
    <property type="entry name" value="PRK11188.1"/>
    <property type="match status" value="1"/>
</dbReference>
<dbReference type="NCBIfam" id="TIGR00438">
    <property type="entry name" value="rrmJ"/>
    <property type="match status" value="1"/>
</dbReference>
<dbReference type="PANTHER" id="PTHR10920">
    <property type="entry name" value="RIBOSOMAL RNA METHYLTRANSFERASE"/>
    <property type="match status" value="1"/>
</dbReference>
<dbReference type="PANTHER" id="PTHR10920:SF18">
    <property type="entry name" value="RRNA METHYLTRANSFERASE 2, MITOCHONDRIAL"/>
    <property type="match status" value="1"/>
</dbReference>
<dbReference type="Pfam" id="PF01728">
    <property type="entry name" value="FtsJ"/>
    <property type="match status" value="1"/>
</dbReference>
<dbReference type="PIRSF" id="PIRSF005461">
    <property type="entry name" value="23S_rRNA_mtase"/>
    <property type="match status" value="1"/>
</dbReference>
<dbReference type="SUPFAM" id="SSF53335">
    <property type="entry name" value="S-adenosyl-L-methionine-dependent methyltransferases"/>
    <property type="match status" value="1"/>
</dbReference>
<feature type="chain" id="PRO_1000195014" description="Ribosomal RNA large subunit methyltransferase E">
    <location>
        <begin position="1"/>
        <end position="208"/>
    </location>
</feature>
<feature type="active site" description="Proton acceptor" evidence="1">
    <location>
        <position position="164"/>
    </location>
</feature>
<feature type="binding site" evidence="1">
    <location>
        <position position="63"/>
    </location>
    <ligand>
        <name>S-adenosyl-L-methionine</name>
        <dbReference type="ChEBI" id="CHEBI:59789"/>
    </ligand>
</feature>
<feature type="binding site" evidence="1">
    <location>
        <position position="65"/>
    </location>
    <ligand>
        <name>S-adenosyl-L-methionine</name>
        <dbReference type="ChEBI" id="CHEBI:59789"/>
    </ligand>
</feature>
<feature type="binding site" evidence="1">
    <location>
        <position position="83"/>
    </location>
    <ligand>
        <name>S-adenosyl-L-methionine</name>
        <dbReference type="ChEBI" id="CHEBI:59789"/>
    </ligand>
</feature>
<feature type="binding site" evidence="1">
    <location>
        <position position="99"/>
    </location>
    <ligand>
        <name>S-adenosyl-L-methionine</name>
        <dbReference type="ChEBI" id="CHEBI:59789"/>
    </ligand>
</feature>
<feature type="binding site" evidence="1">
    <location>
        <position position="124"/>
    </location>
    <ligand>
        <name>S-adenosyl-L-methionine</name>
        <dbReference type="ChEBI" id="CHEBI:59789"/>
    </ligand>
</feature>
<comment type="function">
    <text evidence="1">Specifically methylates the uridine in position 2552 of 23S rRNA at the 2'-O position of the ribose in the fully assembled 50S ribosomal subunit.</text>
</comment>
<comment type="catalytic activity">
    <reaction evidence="1">
        <text>uridine(2552) in 23S rRNA + S-adenosyl-L-methionine = 2'-O-methyluridine(2552) in 23S rRNA + S-adenosyl-L-homocysteine + H(+)</text>
        <dbReference type="Rhea" id="RHEA:42720"/>
        <dbReference type="Rhea" id="RHEA-COMP:10202"/>
        <dbReference type="Rhea" id="RHEA-COMP:10203"/>
        <dbReference type="ChEBI" id="CHEBI:15378"/>
        <dbReference type="ChEBI" id="CHEBI:57856"/>
        <dbReference type="ChEBI" id="CHEBI:59789"/>
        <dbReference type="ChEBI" id="CHEBI:65315"/>
        <dbReference type="ChEBI" id="CHEBI:74478"/>
        <dbReference type="EC" id="2.1.1.166"/>
    </reaction>
</comment>
<comment type="subcellular location">
    <subcellularLocation>
        <location evidence="1">Cytoplasm</location>
    </subcellularLocation>
</comment>
<comment type="similarity">
    <text evidence="1">Belongs to the class I-like SAM-binding methyltransferase superfamily. RNA methyltransferase RlmE family.</text>
</comment>
<proteinExistence type="inferred from homology"/>
<organism>
    <name type="scientific">Salmonella enteritidis PT4 (strain P125109)</name>
    <dbReference type="NCBI Taxonomy" id="550537"/>
    <lineage>
        <taxon>Bacteria</taxon>
        <taxon>Pseudomonadati</taxon>
        <taxon>Pseudomonadota</taxon>
        <taxon>Gammaproteobacteria</taxon>
        <taxon>Enterobacterales</taxon>
        <taxon>Enterobacteriaceae</taxon>
        <taxon>Salmonella</taxon>
    </lineage>
</organism>
<sequence>MTGKKRSASSSRWLQEHFSDKYVQQAQKKGLRSRAWFKLDEIQQSDKLFKPGMTVVDLGAAPGGWSQYVVTQIGGKGRIIACDLLPMDPIVGVDFLQGDFRDELVMKALLERVGDSKVQVVMSDMAPNMSGTPAVDIPRAMYLVELALEMCRDVLAPGGSFVVKVFQGEGFDEYLREIRSLFTKVKVRKPDSSRARSREVYIVATGRK</sequence>
<name>RLME_SALEP</name>
<evidence type="ECO:0000255" key="1">
    <source>
        <dbReference type="HAMAP-Rule" id="MF_01547"/>
    </source>
</evidence>